<feature type="chain" id="PRO_0000357865" description="NADH-quinone oxidoreductase subunit D">
    <location>
        <begin position="1"/>
        <end position="418"/>
    </location>
</feature>
<name>NUOD_NEIG1</name>
<proteinExistence type="inferred from homology"/>
<accession>Q5F618</accession>
<reference key="1">
    <citation type="submission" date="2003-03" db="EMBL/GenBank/DDBJ databases">
        <title>The complete genome sequence of Neisseria gonorrhoeae.</title>
        <authorList>
            <person name="Lewis L.A."/>
            <person name="Gillaspy A.F."/>
            <person name="McLaughlin R.E."/>
            <person name="Gipson M."/>
            <person name="Ducey T.F."/>
            <person name="Ownbey T."/>
            <person name="Hartman K."/>
            <person name="Nydick C."/>
            <person name="Carson M.B."/>
            <person name="Vaughn J."/>
            <person name="Thomson C."/>
            <person name="Song L."/>
            <person name="Lin S."/>
            <person name="Yuan X."/>
            <person name="Najar F."/>
            <person name="Zhan M."/>
            <person name="Ren Q."/>
            <person name="Zhu H."/>
            <person name="Qi S."/>
            <person name="Kenton S.M."/>
            <person name="Lai H."/>
            <person name="White J.D."/>
            <person name="Clifton S."/>
            <person name="Roe B.A."/>
            <person name="Dyer D.W."/>
        </authorList>
    </citation>
    <scope>NUCLEOTIDE SEQUENCE [LARGE SCALE GENOMIC DNA]</scope>
    <source>
        <strain>ATCC 700825 / FA 1090</strain>
    </source>
</reference>
<comment type="function">
    <text evidence="1">NDH-1 shuttles electrons from NADH, via FMN and iron-sulfur (Fe-S) centers, to quinones in the respiratory chain. The immediate electron acceptor for the enzyme in this species is believed to be ubiquinone. Couples the redox reaction to proton translocation (for every two electrons transferred, four hydrogen ions are translocated across the cytoplasmic membrane), and thus conserves the redox energy in a proton gradient.</text>
</comment>
<comment type="catalytic activity">
    <reaction evidence="1">
        <text>a quinone + NADH + 5 H(+)(in) = a quinol + NAD(+) + 4 H(+)(out)</text>
        <dbReference type="Rhea" id="RHEA:57888"/>
        <dbReference type="ChEBI" id="CHEBI:15378"/>
        <dbReference type="ChEBI" id="CHEBI:24646"/>
        <dbReference type="ChEBI" id="CHEBI:57540"/>
        <dbReference type="ChEBI" id="CHEBI:57945"/>
        <dbReference type="ChEBI" id="CHEBI:132124"/>
    </reaction>
</comment>
<comment type="subunit">
    <text evidence="1">NDH-1 is composed of 14 different subunits. Subunits NuoB, C, D, E, F, and G constitute the peripheral sector of the complex.</text>
</comment>
<comment type="subcellular location">
    <subcellularLocation>
        <location evidence="1">Cell inner membrane</location>
        <topology evidence="1">Peripheral membrane protein</topology>
        <orientation evidence="1">Cytoplasmic side</orientation>
    </subcellularLocation>
</comment>
<comment type="similarity">
    <text evidence="1">Belongs to the complex I 49 kDa subunit family.</text>
</comment>
<organism>
    <name type="scientific">Neisseria gonorrhoeae (strain ATCC 700825 / FA 1090)</name>
    <dbReference type="NCBI Taxonomy" id="242231"/>
    <lineage>
        <taxon>Bacteria</taxon>
        <taxon>Pseudomonadati</taxon>
        <taxon>Pseudomonadota</taxon>
        <taxon>Betaproteobacteria</taxon>
        <taxon>Neisseriales</taxon>
        <taxon>Neisseriaceae</taxon>
        <taxon>Neisseria</taxon>
    </lineage>
</organism>
<evidence type="ECO:0000255" key="1">
    <source>
        <dbReference type="HAMAP-Rule" id="MF_01358"/>
    </source>
</evidence>
<keyword id="KW-0997">Cell inner membrane</keyword>
<keyword id="KW-1003">Cell membrane</keyword>
<keyword id="KW-0472">Membrane</keyword>
<keyword id="KW-0520">NAD</keyword>
<keyword id="KW-0874">Quinone</keyword>
<keyword id="KW-1185">Reference proteome</keyword>
<keyword id="KW-1278">Translocase</keyword>
<keyword id="KW-0813">Transport</keyword>
<keyword id="KW-0830">Ubiquinone</keyword>
<gene>
    <name evidence="1" type="primary">nuoD</name>
    <name type="ordered locus">NGO_1748</name>
</gene>
<dbReference type="EC" id="7.1.1.-" evidence="1"/>
<dbReference type="EMBL" id="AE004969">
    <property type="protein sequence ID" value="AAW90369.1"/>
    <property type="molecule type" value="Genomic_DNA"/>
</dbReference>
<dbReference type="RefSeq" id="WP_003689951.1">
    <property type="nucleotide sequence ID" value="NC_002946.2"/>
</dbReference>
<dbReference type="RefSeq" id="YP_208781.1">
    <property type="nucleotide sequence ID" value="NC_002946.2"/>
</dbReference>
<dbReference type="SMR" id="Q5F618"/>
<dbReference type="STRING" id="242231.NGO_1748"/>
<dbReference type="GeneID" id="66754037"/>
<dbReference type="KEGG" id="ngo:NGO_1748"/>
<dbReference type="PATRIC" id="fig|242231.10.peg.2089"/>
<dbReference type="HOGENOM" id="CLU_015134_1_1_4"/>
<dbReference type="Proteomes" id="UP000000535">
    <property type="component" value="Chromosome"/>
</dbReference>
<dbReference type="GO" id="GO:0005886">
    <property type="term" value="C:plasma membrane"/>
    <property type="evidence" value="ECO:0007669"/>
    <property type="project" value="UniProtKB-SubCell"/>
</dbReference>
<dbReference type="GO" id="GO:0051287">
    <property type="term" value="F:NAD binding"/>
    <property type="evidence" value="ECO:0007669"/>
    <property type="project" value="InterPro"/>
</dbReference>
<dbReference type="GO" id="GO:0050136">
    <property type="term" value="F:NADH:ubiquinone reductase (non-electrogenic) activity"/>
    <property type="evidence" value="ECO:0007669"/>
    <property type="project" value="UniProtKB-UniRule"/>
</dbReference>
<dbReference type="GO" id="GO:0048038">
    <property type="term" value="F:quinone binding"/>
    <property type="evidence" value="ECO:0007669"/>
    <property type="project" value="UniProtKB-KW"/>
</dbReference>
<dbReference type="FunFam" id="1.10.645.10:FF:000005">
    <property type="entry name" value="NADH-quinone oxidoreductase subunit D"/>
    <property type="match status" value="1"/>
</dbReference>
<dbReference type="Gene3D" id="1.10.645.10">
    <property type="entry name" value="Cytochrome-c3 Hydrogenase, chain B"/>
    <property type="match status" value="1"/>
</dbReference>
<dbReference type="HAMAP" id="MF_01358">
    <property type="entry name" value="NDH1_NuoD"/>
    <property type="match status" value="1"/>
</dbReference>
<dbReference type="InterPro" id="IPR001135">
    <property type="entry name" value="NADH_Q_OxRdtase_suD"/>
</dbReference>
<dbReference type="InterPro" id="IPR014029">
    <property type="entry name" value="NADH_UbQ_OxRdtase_49kDa_CS"/>
</dbReference>
<dbReference type="InterPro" id="IPR022885">
    <property type="entry name" value="NDH1_su_D/H"/>
</dbReference>
<dbReference type="InterPro" id="IPR029014">
    <property type="entry name" value="NiFe-Hase_large"/>
</dbReference>
<dbReference type="NCBIfam" id="TIGR01962">
    <property type="entry name" value="NuoD"/>
    <property type="match status" value="1"/>
</dbReference>
<dbReference type="NCBIfam" id="NF004739">
    <property type="entry name" value="PRK06075.1"/>
    <property type="match status" value="1"/>
</dbReference>
<dbReference type="PANTHER" id="PTHR11993:SF10">
    <property type="entry name" value="NADH DEHYDROGENASE [UBIQUINONE] IRON-SULFUR PROTEIN 2, MITOCHONDRIAL"/>
    <property type="match status" value="1"/>
</dbReference>
<dbReference type="PANTHER" id="PTHR11993">
    <property type="entry name" value="NADH-UBIQUINONE OXIDOREDUCTASE 49 KDA SUBUNIT"/>
    <property type="match status" value="1"/>
</dbReference>
<dbReference type="Pfam" id="PF00346">
    <property type="entry name" value="Complex1_49kDa"/>
    <property type="match status" value="1"/>
</dbReference>
<dbReference type="SUPFAM" id="SSF56762">
    <property type="entry name" value="HydB/Nqo4-like"/>
    <property type="match status" value="1"/>
</dbReference>
<dbReference type="PROSITE" id="PS00535">
    <property type="entry name" value="COMPLEX1_49K"/>
    <property type="match status" value="1"/>
</dbReference>
<protein>
    <recommendedName>
        <fullName evidence="1">NADH-quinone oxidoreductase subunit D</fullName>
        <ecNumber evidence="1">7.1.1.-</ecNumber>
    </recommendedName>
    <alternativeName>
        <fullName evidence="1">NADH dehydrogenase I subunit D</fullName>
    </alternativeName>
    <alternativeName>
        <fullName evidence="1">NDH-1 subunit D</fullName>
    </alternativeName>
</protein>
<sequence length="418" mass="47594">MANKLRNYTINFGPQHPAAHGVLRMILELDGEQIVRADPHIGLLHRGTEKLAETKTYLQALPYMDRLDYVSMMVNEQAYCLAVEKLAGIDVPIRAQYIRVMFAEVTRILNHLMGIGSHAFDIGAMTAILYAFRDREELMDLYEAVSGARMHAAYFRPGGVYRDLPGFMPKYESSKFRNAKVLKQLNESREGTMLDFIDAFCERFPKNIDTLETLLTDNRIWKQRTVGIGVVSPERAMQKGFTGVMLRGSGVEWDVRKTQPYEVYDKMDFDIPVGVNGDCYDRYLCRMEEMRQSVRIIKQCADWLRVNPGPVITANHKFAPPKRTEMKTGMEDLIHHFKLFTEGMHVPEGETYTAVEHPKGEFGVYIISDGANKPYRLKIRAPGFAHLQGMDEMAKGHMLADVVAIIGTQDIVFGEVDR</sequence>